<comment type="function">
    <text>Acts as a 'third messenger' substrate of protein kinase C-mediated molecular cascades during synaptic development and remodeling. Binds to calmodulin in the absence of calcium.</text>
</comment>
<comment type="tissue specificity">
    <text>Is highly enriched in brain. Accumulates postsynaptically in dendritic spines of neostriatal neurons.</text>
</comment>
<comment type="domain">
    <text evidence="1">Neurogranin is intrinsically unstructured; however, upon binding with CaM, The IQ domain adopts a helical conformation.</text>
</comment>
<comment type="PTM">
    <text>The N-terminus is blocked.</text>
</comment>
<comment type="PTM">
    <text evidence="1">Phosphorylated at Ser-36 by PHK and PKC. Phosphorylation prevents interaction with Calmodulin and interrupts several learning- and memory-associated functions (By similarity).</text>
</comment>
<comment type="mass spectrometry">
    <molecule>Neurogranin</molecule>
</comment>
<comment type="similarity">
    <text evidence="8">Belongs to the neurogranin family.</text>
</comment>
<accession>P35722</accession>
<accession>Q2KI68</accession>
<keyword id="KW-0007">Acetylation</keyword>
<keyword id="KW-0112">Calmodulin-binding</keyword>
<keyword id="KW-0164">Citrullination</keyword>
<keyword id="KW-0903">Direct protein sequencing</keyword>
<keyword id="KW-0488">Methylation</keyword>
<keyword id="KW-0597">Phosphoprotein</keyword>
<keyword id="KW-1185">Reference proteome</keyword>
<evidence type="ECO:0000250" key="1"/>
<evidence type="ECO:0000250" key="2">
    <source>
        <dbReference type="UniProtKB" id="Q92686"/>
    </source>
</evidence>
<evidence type="ECO:0000255" key="3">
    <source>
        <dbReference type="PROSITE-ProRule" id="PRU00116"/>
    </source>
</evidence>
<evidence type="ECO:0000256" key="4">
    <source>
        <dbReference type="SAM" id="MobiDB-lite"/>
    </source>
</evidence>
<evidence type="ECO:0000269" key="5">
    <source>
    </source>
</evidence>
<evidence type="ECO:0000269" key="6">
    <source>
    </source>
</evidence>
<evidence type="ECO:0000269" key="7">
    <source>
    </source>
</evidence>
<evidence type="ECO:0000305" key="8"/>
<name>NEUG_BOVIN</name>
<reference key="1">
    <citation type="journal article" date="1991" name="J. Biol. Chem.">
        <title>Purification and characterization of a brain-specific protein kinase C substrate, neurogranin (p17). Identification of a consensus amino acid sequence between neurogranin and neuromodulin (GAP43) that corresponds to the protein kinase C phosphorylation site and the calmodulin-binding domain.</title>
        <authorList>
            <person name="Baudier J."/>
            <person name="Deloulme J.C."/>
            <person name="van Dorsselaer A."/>
            <person name="Black D."/>
            <person name="Matthes H.W.D."/>
        </authorList>
    </citation>
    <scope>PROTEIN SEQUENCE</scope>
    <scope>PHOSPHORYLATION AT SER-36</scope>
    <scope>ACETYLATION AT MET-1</scope>
    <scope>MASS SPECTROMETRY</scope>
</reference>
<reference key="2">
    <citation type="submission" date="2006-01" db="EMBL/GenBank/DDBJ databases">
        <authorList>
            <consortium name="NIH - Mammalian Gene Collection (MGC) project"/>
        </authorList>
    </citation>
    <scope>NUCLEOTIDE SEQUENCE [LARGE SCALE MRNA]</scope>
    <source>
        <strain>Hereford</strain>
        <tissue>Hypothalamus</tissue>
    </source>
</reference>
<reference key="3">
    <citation type="journal article" date="1993" name="J. Biol. Chem.">
        <title>Phosphorylase kinase phosphorylates the calmodulin-binding regulatory regions of neuronal tissue-specific proteins B-50 (GAP-43) and neurogranin.</title>
        <authorList>
            <person name="Paudel H.K."/>
            <person name="Zwiers H."/>
            <person name="Wang J.H."/>
        </authorList>
    </citation>
    <scope>PHOSPHORYLATION AT SER-36 BY PHK</scope>
</reference>
<reference key="4">
    <citation type="journal article" date="2013" name="Proteomics">
        <title>Identification and Characterization of citrulline-modified brain proteins by combining HCD and CID fragmentation.</title>
        <authorList>
            <person name="Jin Z."/>
            <person name="Fu Z."/>
            <person name="Yang J."/>
            <person name="Troncosco J."/>
            <person name="Everett A.D."/>
            <person name="Van Eyk J.E."/>
        </authorList>
    </citation>
    <scope>CITRULLINATION AT ARG-68</scope>
</reference>
<organism>
    <name type="scientific">Bos taurus</name>
    <name type="common">Bovine</name>
    <dbReference type="NCBI Taxonomy" id="9913"/>
    <lineage>
        <taxon>Eukaryota</taxon>
        <taxon>Metazoa</taxon>
        <taxon>Chordata</taxon>
        <taxon>Craniata</taxon>
        <taxon>Vertebrata</taxon>
        <taxon>Euteleostomi</taxon>
        <taxon>Mammalia</taxon>
        <taxon>Eutheria</taxon>
        <taxon>Laurasiatheria</taxon>
        <taxon>Artiodactyla</taxon>
        <taxon>Ruminantia</taxon>
        <taxon>Pecora</taxon>
        <taxon>Bovidae</taxon>
        <taxon>Bovinae</taxon>
        <taxon>Bos</taxon>
    </lineage>
</organism>
<protein>
    <recommendedName>
        <fullName>Neurogranin</fullName>
        <shortName>NG</shortName>
    </recommendedName>
    <alternativeName>
        <fullName>B-50 immunoreactive C-kinase substrate</fullName>
        <shortName>BICKS</shortName>
    </alternativeName>
    <alternativeName>
        <fullName>p17</fullName>
    </alternativeName>
    <component>
        <recommendedName>
            <fullName>NEUG(55-78)</fullName>
        </recommendedName>
    </component>
</protein>
<proteinExistence type="evidence at protein level"/>
<sequence>MDCCTESACSKPDDDILDIPLDDPGANAAAAKIQASFRGHMARKKIKSGERGRKGPGPGGPGGAGGARGGAGGGPSGD</sequence>
<feature type="chain" id="PRO_0000159589" description="Neurogranin">
    <location>
        <begin position="1"/>
        <end position="78"/>
    </location>
</feature>
<feature type="peptide" id="PRO_0000377700" description="NEUG(55-78)" evidence="1">
    <location>
        <begin position="55"/>
        <end position="78"/>
    </location>
</feature>
<feature type="domain" description="IQ" evidence="3">
    <location>
        <begin position="26"/>
        <end position="49"/>
    </location>
</feature>
<feature type="domain" description="Collagen-like">
    <location>
        <begin position="50"/>
        <end position="78"/>
    </location>
</feature>
<feature type="region of interest" description="Disordered" evidence="4">
    <location>
        <begin position="38"/>
        <end position="78"/>
    </location>
</feature>
<feature type="compositionally biased region" description="Gly residues" evidence="4">
    <location>
        <begin position="55"/>
        <end position="78"/>
    </location>
</feature>
<feature type="site" description="Crucial for interaction with calmodulin" evidence="1">
    <location>
        <position position="38"/>
    </location>
</feature>
<feature type="modified residue" description="N-acetylmethionine" evidence="5">
    <location>
        <position position="1"/>
    </location>
</feature>
<feature type="modified residue" description="Phosphoserine; by PHK and PKC" evidence="5 7">
    <location>
        <position position="36"/>
    </location>
</feature>
<feature type="modified residue" description="Citrulline; partial" evidence="6">
    <location>
        <position position="68"/>
    </location>
</feature>
<feature type="modified residue" description="Omega-N-methylarginine" evidence="2">
    <location>
        <position position="68"/>
    </location>
</feature>
<feature type="sequence conflict" description="In Ref. 1; AA sequence." evidence="8" ref="1">
    <original>K</original>
    <variation>C</variation>
    <location>
        <position position="11"/>
    </location>
</feature>
<feature type="sequence conflict" description="In Ref. 1; AA sequence." evidence="8" ref="1">
    <original>D</original>
    <variation>G</variation>
    <location>
        <position position="78"/>
    </location>
</feature>
<gene>
    <name type="primary">NRGN</name>
</gene>
<dbReference type="EMBL" id="BC112751">
    <property type="protein sequence ID" value="AAI12752.1"/>
    <property type="molecule type" value="mRNA"/>
</dbReference>
<dbReference type="PIR" id="A39034">
    <property type="entry name" value="A39034"/>
</dbReference>
<dbReference type="RefSeq" id="NP_001106784.1">
    <property type="nucleotide sequence ID" value="NM_001113313.2"/>
</dbReference>
<dbReference type="BMRB" id="P35722"/>
<dbReference type="SMR" id="P35722"/>
<dbReference type="FunCoup" id="P35722">
    <property type="interactions" value="294"/>
</dbReference>
<dbReference type="STRING" id="9913.ENSBTAP00000001930"/>
<dbReference type="iPTMnet" id="P35722"/>
<dbReference type="PaxDb" id="9913-ENSBTAP00000001930"/>
<dbReference type="Ensembl" id="ENSBTAT00000001930.4">
    <property type="protein sequence ID" value="ENSBTAP00000001930.3"/>
    <property type="gene ID" value="ENSBTAG00000001474.5"/>
</dbReference>
<dbReference type="GeneID" id="616955"/>
<dbReference type="KEGG" id="bta:616955"/>
<dbReference type="CTD" id="4900"/>
<dbReference type="VEuPathDB" id="HostDB:ENSBTAG00000001474"/>
<dbReference type="VGNC" id="VGNC:32262">
    <property type="gene designation" value="NRGN"/>
</dbReference>
<dbReference type="eggNOG" id="ENOG502S6YP">
    <property type="taxonomic scope" value="Eukaryota"/>
</dbReference>
<dbReference type="GeneTree" id="ENSGT00440000039324"/>
<dbReference type="HOGENOM" id="CLU_129609_1_0_1"/>
<dbReference type="InParanoid" id="P35722"/>
<dbReference type="OMA" id="RPQESAC"/>
<dbReference type="TreeFam" id="TF342962"/>
<dbReference type="Proteomes" id="UP000009136">
    <property type="component" value="Chromosome 29"/>
</dbReference>
<dbReference type="Bgee" id="ENSBTAG00000001474">
    <property type="expression patterns" value="Expressed in Ammon's horn and 99 other cell types or tissues"/>
</dbReference>
<dbReference type="GO" id="GO:0005516">
    <property type="term" value="F:calmodulin binding"/>
    <property type="evidence" value="ECO:0007669"/>
    <property type="project" value="UniProtKB-KW"/>
</dbReference>
<dbReference type="Gene3D" id="1.20.5.190">
    <property type="match status" value="1"/>
</dbReference>
<dbReference type="InterPro" id="IPR000048">
    <property type="entry name" value="IQ_motif_EF-hand-BS"/>
</dbReference>
<dbReference type="PANTHER" id="PTHR10699">
    <property type="entry name" value="NEUROMODULIN"/>
    <property type="match status" value="1"/>
</dbReference>
<dbReference type="PANTHER" id="PTHR10699:SF16">
    <property type="entry name" value="SPERM SURFACE PROTEIN SP17"/>
    <property type="match status" value="1"/>
</dbReference>
<dbReference type="Pfam" id="PF00612">
    <property type="entry name" value="IQ"/>
    <property type="match status" value="1"/>
</dbReference>
<dbReference type="SMART" id="SM00015">
    <property type="entry name" value="IQ"/>
    <property type="match status" value="1"/>
</dbReference>
<dbReference type="PROSITE" id="PS50096">
    <property type="entry name" value="IQ"/>
    <property type="match status" value="1"/>
</dbReference>